<proteinExistence type="evidence at protein level"/>
<accession>Q06902</accession>
<accession>Q00249</accession>
<accession>Q2U5X3</accession>
<protein>
    <recommendedName>
        <fullName evidence="10">Aspergillopepsin-1</fullName>
        <ecNumber evidence="6">3.4.23.18</ecNumber>
    </recommendedName>
    <alternativeName>
        <fullName evidence="8">Acid protease A2</fullName>
    </alternativeName>
    <alternativeName>
        <fullName>Aspartic protease pepA</fullName>
    </alternativeName>
    <alternativeName>
        <fullName>Aspergillopepsin I</fullName>
    </alternativeName>
    <alternativeName>
        <fullName evidence="9">Aspergillopepsin O</fullName>
        <shortName>PEPO</shortName>
    </alternativeName>
    <alternativeName>
        <fullName>Aspergillopeptidase A</fullName>
        <shortName>PEPA</shortName>
    </alternativeName>
</protein>
<feature type="signal peptide" evidence="2">
    <location>
        <begin position="1"/>
        <end position="20"/>
    </location>
</feature>
<feature type="propeptide" id="PRO_0000025922" description="Activation peptide" evidence="1">
    <location>
        <begin position="21"/>
        <end position="77"/>
    </location>
</feature>
<feature type="chain" id="PRO_0000025923" description="Aspergillopepsin-1">
    <location>
        <begin position="78"/>
        <end position="404"/>
    </location>
</feature>
<feature type="domain" description="Peptidase A1" evidence="4">
    <location>
        <begin position="95"/>
        <end position="401"/>
    </location>
</feature>
<feature type="active site" evidence="4">
    <location>
        <position position="111"/>
    </location>
</feature>
<feature type="active site" evidence="4">
    <location>
        <position position="293"/>
    </location>
</feature>
<feature type="glycosylation site" description="N-linked (GlcNAc...) asparagine" evidence="3">
    <location>
        <position position="140"/>
    </location>
</feature>
<feature type="disulfide bond" evidence="4">
    <location>
        <begin position="329"/>
        <end position="364"/>
    </location>
</feature>
<feature type="sequence conflict" description="In Ref. 1; BAA02994." evidence="10" ref="1">
    <original>T</original>
    <variation>S</variation>
    <location>
        <position position="289"/>
    </location>
</feature>
<keyword id="KW-0064">Aspartyl protease</keyword>
<keyword id="KW-0903">Direct protein sequencing</keyword>
<keyword id="KW-1015">Disulfide bond</keyword>
<keyword id="KW-0325">Glycoprotein</keyword>
<keyword id="KW-0378">Hydrolase</keyword>
<keyword id="KW-0645">Protease</keyword>
<keyword id="KW-1185">Reference proteome</keyword>
<keyword id="KW-0964">Secreted</keyword>
<keyword id="KW-0732">Signal</keyword>
<keyword id="KW-0865">Zymogen</keyword>
<dbReference type="EC" id="3.4.23.18" evidence="6"/>
<dbReference type="EMBL" id="D13894">
    <property type="protein sequence ID" value="BAA02994.1"/>
    <property type="molecule type" value="Genomic_DNA"/>
</dbReference>
<dbReference type="EMBL" id="M92927">
    <property type="protein sequence ID" value="AAA32704.1"/>
    <property type="molecule type" value="Genomic_DNA"/>
</dbReference>
<dbReference type="EMBL" id="BA000053">
    <property type="protein sequence ID" value="BAE63042.1"/>
    <property type="molecule type" value="Genomic_DNA"/>
</dbReference>
<dbReference type="PIR" id="JN0630">
    <property type="entry name" value="JN0630"/>
</dbReference>
<dbReference type="RefSeq" id="XP_001824175.1">
    <property type="nucleotide sequence ID" value="XM_001824123.2"/>
</dbReference>
<dbReference type="SMR" id="Q06902"/>
<dbReference type="STRING" id="510516.Q06902"/>
<dbReference type="MEROPS" id="A01.026"/>
<dbReference type="GlyCosmos" id="Q06902">
    <property type="glycosylation" value="1 site, No reported glycans"/>
</dbReference>
<dbReference type="EnsemblFungi" id="BAE63042">
    <property type="protein sequence ID" value="BAE63042"/>
    <property type="gene ID" value="AO090120000474"/>
</dbReference>
<dbReference type="GeneID" id="5996434"/>
<dbReference type="KEGG" id="aor:AO090120000474"/>
<dbReference type="VEuPathDB" id="FungiDB:AO090120000474"/>
<dbReference type="HOGENOM" id="CLU_013253_0_1_1"/>
<dbReference type="OMA" id="NRLGWAP"/>
<dbReference type="OrthoDB" id="96322at5052"/>
<dbReference type="BRENDA" id="3.4.23.18">
    <property type="organism ID" value="522"/>
</dbReference>
<dbReference type="Proteomes" id="UP000006564">
    <property type="component" value="Chromosome 5"/>
</dbReference>
<dbReference type="GO" id="GO:0005576">
    <property type="term" value="C:extracellular region"/>
    <property type="evidence" value="ECO:0000314"/>
    <property type="project" value="AspGD"/>
</dbReference>
<dbReference type="GO" id="GO:0004190">
    <property type="term" value="F:aspartic-type endopeptidase activity"/>
    <property type="evidence" value="ECO:0007669"/>
    <property type="project" value="UniProtKB-KW"/>
</dbReference>
<dbReference type="GO" id="GO:0006508">
    <property type="term" value="P:proteolysis"/>
    <property type="evidence" value="ECO:0007669"/>
    <property type="project" value="UniProtKB-KW"/>
</dbReference>
<dbReference type="CDD" id="cd06097">
    <property type="entry name" value="Aspergillopepsin_like"/>
    <property type="match status" value="1"/>
</dbReference>
<dbReference type="FunFam" id="2.40.70.10:FF:000024">
    <property type="entry name" value="Endothiapepsin"/>
    <property type="match status" value="1"/>
</dbReference>
<dbReference type="FunFam" id="2.40.70.10:FF:000026">
    <property type="entry name" value="Endothiapepsin"/>
    <property type="match status" value="1"/>
</dbReference>
<dbReference type="Gene3D" id="2.40.70.10">
    <property type="entry name" value="Acid Proteases"/>
    <property type="match status" value="2"/>
</dbReference>
<dbReference type="InterPro" id="IPR001461">
    <property type="entry name" value="Aspartic_peptidase_A1"/>
</dbReference>
<dbReference type="InterPro" id="IPR001969">
    <property type="entry name" value="Aspartic_peptidase_AS"/>
</dbReference>
<dbReference type="InterPro" id="IPR034163">
    <property type="entry name" value="Aspergillopepsin-like_cat_dom"/>
</dbReference>
<dbReference type="InterPro" id="IPR033121">
    <property type="entry name" value="PEPTIDASE_A1"/>
</dbReference>
<dbReference type="InterPro" id="IPR021109">
    <property type="entry name" value="Peptidase_aspartic_dom_sf"/>
</dbReference>
<dbReference type="PANTHER" id="PTHR47966:SF2">
    <property type="entry name" value="ASPERGILLOPEPSIN-1-RELATED"/>
    <property type="match status" value="1"/>
</dbReference>
<dbReference type="PANTHER" id="PTHR47966">
    <property type="entry name" value="BETA-SITE APP-CLEAVING ENZYME, ISOFORM A-RELATED"/>
    <property type="match status" value="1"/>
</dbReference>
<dbReference type="Pfam" id="PF00026">
    <property type="entry name" value="Asp"/>
    <property type="match status" value="1"/>
</dbReference>
<dbReference type="PRINTS" id="PR00792">
    <property type="entry name" value="PEPSIN"/>
</dbReference>
<dbReference type="SUPFAM" id="SSF50630">
    <property type="entry name" value="Acid proteases"/>
    <property type="match status" value="1"/>
</dbReference>
<dbReference type="PROSITE" id="PS00141">
    <property type="entry name" value="ASP_PROTEASE"/>
    <property type="match status" value="2"/>
</dbReference>
<dbReference type="PROSITE" id="PS51767">
    <property type="entry name" value="PEPTIDASE_A1"/>
    <property type="match status" value="1"/>
</dbReference>
<name>PEPA_ASPOR</name>
<organism>
    <name type="scientific">Aspergillus oryzae (strain ATCC 42149 / RIB 40)</name>
    <name type="common">Yellow koji mold</name>
    <dbReference type="NCBI Taxonomy" id="510516"/>
    <lineage>
        <taxon>Eukaryota</taxon>
        <taxon>Fungi</taxon>
        <taxon>Dikarya</taxon>
        <taxon>Ascomycota</taxon>
        <taxon>Pezizomycotina</taxon>
        <taxon>Eurotiomycetes</taxon>
        <taxon>Eurotiomycetidae</taxon>
        <taxon>Eurotiales</taxon>
        <taxon>Aspergillaceae</taxon>
        <taxon>Aspergillus</taxon>
        <taxon>Aspergillus subgen. Circumdati</taxon>
    </lineage>
</organism>
<gene>
    <name evidence="7" type="primary">pepA</name>
    <name evidence="9" type="synonym">pepO</name>
    <name type="ORF">AO090120000474</name>
</gene>
<sequence>MVILSKVAAVAVGLSTVASALPTGPSHSPHARRGFTINQITRQTARVGPKTASFPAIYSRALAKYGGTVPAHLKSAVASGHGTVVTSPEPNDIEYLTPVNIGGTTLNLDFDTGSADLWVFSEELPKSEQTGHDVYKPSGNASKIAGASWDISYGDGSSASGDVYQDTVTVGGVTAQGQAVEAASKISDQFVQDKNNDGLLGLAFSSINTVKPKPQTTFFDTVKDQLDAPLFAVTLKYHAPGSYDFGFIDKSKFTGELAYADVDDSQGFWQFTADGYSVGKGDAQKAPITGIADTGTTLVMLDDEIVDAYYKQVQGAKNDASAGGYVFPCETELPEFTVVIGSYNAVIPGKHINYAPLQEGSSTCVGGIQSNSGLGLSILGDVFLKSQYVVFDSQGPRLGFAAQA</sequence>
<evidence type="ECO:0000250" key="1">
    <source>
        <dbReference type="UniProtKB" id="Q12567"/>
    </source>
</evidence>
<evidence type="ECO:0000255" key="2"/>
<evidence type="ECO:0000255" key="3">
    <source>
        <dbReference type="PROSITE-ProRule" id="PRU00498"/>
    </source>
</evidence>
<evidence type="ECO:0000255" key="4">
    <source>
        <dbReference type="PROSITE-ProRule" id="PRU01103"/>
    </source>
</evidence>
<evidence type="ECO:0000269" key="5">
    <source>
    </source>
</evidence>
<evidence type="ECO:0000269" key="6">
    <source>
    </source>
</evidence>
<evidence type="ECO:0000303" key="7">
    <source>
    </source>
</evidence>
<evidence type="ECO:0000303" key="8">
    <source>
    </source>
</evidence>
<evidence type="ECO:0000303" key="9">
    <source>
    </source>
</evidence>
<evidence type="ECO:0000305" key="10"/>
<evidence type="ECO:0000305" key="11">
    <source>
    </source>
</evidence>
<comment type="function">
    <text evidence="5">Secreted aspartic endopeptidase that allows assimilation of proteinaceous substrates. The scissile peptide bond is attacked by a nucleophilic water molecule activated by two aspartic residues in the active site. Shows a broad primary substrate specificity. Favors hydrophobic residues at the P1 and P1' positions, but also accepts a lysine residue in the P1 position, leading to the activation of trypsinogen and chymotrypsinogen A. Hydrolyzes bovine chymotrysinogen A between positions 'Arg-15' and 'Ile-16'.</text>
</comment>
<comment type="catalytic activity">
    <reaction evidence="6">
        <text>Hydrolysis of proteins with broad specificity. Generally favors hydrophobic residues in P1 and P1', but also accepts Lys in P1, which leads to activation of trypsinogen. Does not clot milk.</text>
        <dbReference type="EC" id="3.4.23.18"/>
    </reaction>
</comment>
<comment type="activity regulation">
    <text evidence="6">Inhibited by sodium lauryl sulfonate.</text>
</comment>
<comment type="biophysicochemical properties">
    <kinetics>
        <KM evidence="5">0.064 mM for Z-His-Phe-Phe-OEt</KM>
        <KM evidence="5">0.037 mM for Z-Ala-Ala-Phe-Phe-OPy4Pr</KM>
        <KM evidence="5">0.1 mM for bovine trypsinogen</KM>
        <KM evidence="5">0.18 mM for bovine chymotrysinogen A</KM>
        <text evidence="5">kcat is 1.65 sec(-1) with Z-His-Phe-Phe-OEt as substrate, 0.35 sec(-1) with Z-Ala-Ala-Phe-Phe-OPy4Pr as substrate, 13 sec(-1) with bovine trypsinogen as substrate and 1.14 sec(-1) with bovine chymotrysinogen A as substrate.</text>
    </kinetics>
    <phDependence>
        <text evidence="6">Optimum pH is 3.0-4.2.</text>
    </phDependence>
</comment>
<comment type="subcellular location">
    <subcellularLocation>
        <location evidence="6">Secreted</location>
    </subcellularLocation>
</comment>
<comment type="PTM">
    <text evidence="11">Two isozymes of this enzyme exist which differ only by their non-covalent association with carbohydrate.</text>
</comment>
<comment type="similarity">
    <text evidence="4">Belongs to the peptidase A1 family.</text>
</comment>
<reference key="1">
    <citation type="journal article" date="1993" name="Biosci. Biotechnol. Biochem.">
        <title>Cloning and nucleotide sequence of the acid protease-encoding gene (pepA) from Aspergillus oryzae.</title>
        <authorList>
            <person name="Gomi K."/>
            <person name="Arikawa K."/>
            <person name="Kamiya N."/>
            <person name="Kitamoto K."/>
            <person name="Kumagai C."/>
        </authorList>
    </citation>
    <scope>NUCLEOTIDE SEQUENCE [GENOMIC DNA]</scope>
    <scope>PROTEIN SEQUENCE OF 237-249 AND 386-404</scope>
    <source>
        <strain>ATCC 42149 / RIB 40</strain>
    </source>
</reference>
<reference key="2">
    <citation type="journal article" date="1993" name="Gene">
        <title>Isolation and characterization of the Aspergillus oryzae gene encoding aspergillopepsin O.</title>
        <authorList>
            <person name="Berka R.M."/>
            <person name="Carmona C.L."/>
            <person name="Kirk H.J."/>
            <person name="Thompson S.A."/>
            <person name="Ward M."/>
        </authorList>
    </citation>
    <scope>NUCLEOTIDE SEQUENCE [GENOMIC DNA]</scope>
</reference>
<reference key="3">
    <citation type="journal article" date="2005" name="Nature">
        <title>Genome sequencing and analysis of Aspergillus oryzae.</title>
        <authorList>
            <person name="Machida M."/>
            <person name="Asai K."/>
            <person name="Sano M."/>
            <person name="Tanaka T."/>
            <person name="Kumagai T."/>
            <person name="Terai G."/>
            <person name="Kusumoto K."/>
            <person name="Arima T."/>
            <person name="Akita O."/>
            <person name="Kashiwagi Y."/>
            <person name="Abe K."/>
            <person name="Gomi K."/>
            <person name="Horiuchi H."/>
            <person name="Kitamoto K."/>
            <person name="Kobayashi T."/>
            <person name="Takeuchi M."/>
            <person name="Denning D.W."/>
            <person name="Galagan J.E."/>
            <person name="Nierman W.C."/>
            <person name="Yu J."/>
            <person name="Archer D.B."/>
            <person name="Bennett J.W."/>
            <person name="Bhatnagar D."/>
            <person name="Cleveland T.E."/>
            <person name="Fedorova N.D."/>
            <person name="Gotoh O."/>
            <person name="Horikawa H."/>
            <person name="Hosoyama A."/>
            <person name="Ichinomiya M."/>
            <person name="Igarashi R."/>
            <person name="Iwashita K."/>
            <person name="Juvvadi P.R."/>
            <person name="Kato M."/>
            <person name="Kato Y."/>
            <person name="Kin T."/>
            <person name="Kokubun A."/>
            <person name="Maeda H."/>
            <person name="Maeyama N."/>
            <person name="Maruyama J."/>
            <person name="Nagasaki H."/>
            <person name="Nakajima T."/>
            <person name="Oda K."/>
            <person name="Okada K."/>
            <person name="Paulsen I."/>
            <person name="Sakamoto K."/>
            <person name="Sawano T."/>
            <person name="Takahashi M."/>
            <person name="Takase K."/>
            <person name="Terabayashi Y."/>
            <person name="Wortman J.R."/>
            <person name="Yamada O."/>
            <person name="Yamagata Y."/>
            <person name="Anazawa H."/>
            <person name="Hata Y."/>
            <person name="Koide Y."/>
            <person name="Komori T."/>
            <person name="Koyama Y."/>
            <person name="Minetoki T."/>
            <person name="Suharnan S."/>
            <person name="Tanaka A."/>
            <person name="Isono K."/>
            <person name="Kuhara S."/>
            <person name="Ogasawara N."/>
            <person name="Kikuchi H."/>
        </authorList>
    </citation>
    <scope>NUCLEOTIDE SEQUENCE [LARGE SCALE GENOMIC DNA]</scope>
    <source>
        <strain>ATCC 42149 / RIB 40</strain>
    </source>
</reference>
<reference key="4">
    <citation type="journal article" date="1975" name="Biochem. J.">
        <title>Aspergillus oryzae acid proteinase. Purification and properties, and formation of pi-chymotrypsin.</title>
        <authorList>
            <person name="Davidson R."/>
            <person name="Gertler A."/>
            <person name="Hofmann T."/>
        </authorList>
    </citation>
    <scope>FUNCTION</scope>
    <scope>CATALYTIC ACTIVITY</scope>
    <scope>BIOPHYSICOCHEMICAL PROPERTIES</scope>
</reference>
<reference key="5">
    <citation type="journal article" date="1976" name="Biochim. Biophys. Acta">
        <title>Purification and characterization of the two molecular forms of Aspergillus oryzae acid protease.</title>
        <authorList>
            <person name="Tsujita Y."/>
            <person name="Endo A."/>
        </authorList>
    </citation>
    <scope>BIOPHYSICOCHEMICAL PROPERTIES</scope>
    <scope>ACTIVITY REGULATION</scope>
    <scope>SUBCELLULAR LOCATION</scope>
</reference>